<dbReference type="EC" id="5.6.1.7" evidence="1"/>
<dbReference type="EMBL" id="CP000510">
    <property type="protein sequence ID" value="ABM02687.1"/>
    <property type="molecule type" value="Genomic_DNA"/>
</dbReference>
<dbReference type="RefSeq" id="WP_011769250.1">
    <property type="nucleotide sequence ID" value="NC_008709.1"/>
</dbReference>
<dbReference type="SMR" id="A1ST72"/>
<dbReference type="STRING" id="357804.Ping_0844"/>
<dbReference type="KEGG" id="pin:Ping_0844"/>
<dbReference type="eggNOG" id="COG0459">
    <property type="taxonomic scope" value="Bacteria"/>
</dbReference>
<dbReference type="HOGENOM" id="CLU_016503_3_0_6"/>
<dbReference type="Proteomes" id="UP000000639">
    <property type="component" value="Chromosome"/>
</dbReference>
<dbReference type="GO" id="GO:0005737">
    <property type="term" value="C:cytoplasm"/>
    <property type="evidence" value="ECO:0007669"/>
    <property type="project" value="UniProtKB-SubCell"/>
</dbReference>
<dbReference type="GO" id="GO:0005524">
    <property type="term" value="F:ATP binding"/>
    <property type="evidence" value="ECO:0007669"/>
    <property type="project" value="UniProtKB-UniRule"/>
</dbReference>
<dbReference type="GO" id="GO:0140662">
    <property type="term" value="F:ATP-dependent protein folding chaperone"/>
    <property type="evidence" value="ECO:0007669"/>
    <property type="project" value="InterPro"/>
</dbReference>
<dbReference type="GO" id="GO:0016853">
    <property type="term" value="F:isomerase activity"/>
    <property type="evidence" value="ECO:0007669"/>
    <property type="project" value="UniProtKB-KW"/>
</dbReference>
<dbReference type="GO" id="GO:0051082">
    <property type="term" value="F:unfolded protein binding"/>
    <property type="evidence" value="ECO:0007669"/>
    <property type="project" value="UniProtKB-UniRule"/>
</dbReference>
<dbReference type="GO" id="GO:0042026">
    <property type="term" value="P:protein refolding"/>
    <property type="evidence" value="ECO:0007669"/>
    <property type="project" value="UniProtKB-UniRule"/>
</dbReference>
<dbReference type="CDD" id="cd03344">
    <property type="entry name" value="GroEL"/>
    <property type="match status" value="1"/>
</dbReference>
<dbReference type="FunFam" id="1.10.560.10:FF:000001">
    <property type="entry name" value="60 kDa chaperonin"/>
    <property type="match status" value="1"/>
</dbReference>
<dbReference type="FunFam" id="3.50.7.10:FF:000001">
    <property type="entry name" value="60 kDa chaperonin"/>
    <property type="match status" value="1"/>
</dbReference>
<dbReference type="Gene3D" id="3.50.7.10">
    <property type="entry name" value="GroEL"/>
    <property type="match status" value="1"/>
</dbReference>
<dbReference type="Gene3D" id="1.10.560.10">
    <property type="entry name" value="GroEL-like equatorial domain"/>
    <property type="match status" value="1"/>
</dbReference>
<dbReference type="Gene3D" id="3.30.260.10">
    <property type="entry name" value="TCP-1-like chaperonin intermediate domain"/>
    <property type="match status" value="1"/>
</dbReference>
<dbReference type="HAMAP" id="MF_00600">
    <property type="entry name" value="CH60"/>
    <property type="match status" value="1"/>
</dbReference>
<dbReference type="InterPro" id="IPR018370">
    <property type="entry name" value="Chaperonin_Cpn60_CS"/>
</dbReference>
<dbReference type="InterPro" id="IPR001844">
    <property type="entry name" value="Cpn60/GroEL"/>
</dbReference>
<dbReference type="InterPro" id="IPR002423">
    <property type="entry name" value="Cpn60/GroEL/TCP-1"/>
</dbReference>
<dbReference type="InterPro" id="IPR027409">
    <property type="entry name" value="GroEL-like_apical_dom_sf"/>
</dbReference>
<dbReference type="InterPro" id="IPR027413">
    <property type="entry name" value="GROEL-like_equatorial_sf"/>
</dbReference>
<dbReference type="InterPro" id="IPR027410">
    <property type="entry name" value="TCP-1-like_intermed_sf"/>
</dbReference>
<dbReference type="NCBIfam" id="TIGR02348">
    <property type="entry name" value="GroEL"/>
    <property type="match status" value="1"/>
</dbReference>
<dbReference type="NCBIfam" id="NF000592">
    <property type="entry name" value="PRK00013.1"/>
    <property type="match status" value="1"/>
</dbReference>
<dbReference type="NCBIfam" id="NF009487">
    <property type="entry name" value="PRK12849.1"/>
    <property type="match status" value="1"/>
</dbReference>
<dbReference type="NCBIfam" id="NF009488">
    <property type="entry name" value="PRK12850.1"/>
    <property type="match status" value="1"/>
</dbReference>
<dbReference type="NCBIfam" id="NF009489">
    <property type="entry name" value="PRK12851.1"/>
    <property type="match status" value="1"/>
</dbReference>
<dbReference type="PANTHER" id="PTHR45633">
    <property type="entry name" value="60 KDA HEAT SHOCK PROTEIN, MITOCHONDRIAL"/>
    <property type="match status" value="1"/>
</dbReference>
<dbReference type="Pfam" id="PF00118">
    <property type="entry name" value="Cpn60_TCP1"/>
    <property type="match status" value="1"/>
</dbReference>
<dbReference type="PRINTS" id="PR00298">
    <property type="entry name" value="CHAPERONIN60"/>
</dbReference>
<dbReference type="SUPFAM" id="SSF52029">
    <property type="entry name" value="GroEL apical domain-like"/>
    <property type="match status" value="1"/>
</dbReference>
<dbReference type="SUPFAM" id="SSF48592">
    <property type="entry name" value="GroEL equatorial domain-like"/>
    <property type="match status" value="1"/>
</dbReference>
<dbReference type="SUPFAM" id="SSF54849">
    <property type="entry name" value="GroEL-intermediate domain like"/>
    <property type="match status" value="1"/>
</dbReference>
<dbReference type="PROSITE" id="PS00296">
    <property type="entry name" value="CHAPERONINS_CPN60"/>
    <property type="match status" value="1"/>
</dbReference>
<reference key="1">
    <citation type="journal article" date="2008" name="BMC Genomics">
        <title>Genomics of an extreme psychrophile, Psychromonas ingrahamii.</title>
        <authorList>
            <person name="Riley M."/>
            <person name="Staley J.T."/>
            <person name="Danchin A."/>
            <person name="Wang T.Z."/>
            <person name="Brettin T.S."/>
            <person name="Hauser L.J."/>
            <person name="Land M.L."/>
            <person name="Thompson L.S."/>
        </authorList>
    </citation>
    <scope>NUCLEOTIDE SEQUENCE [LARGE SCALE GENOMIC DNA]</scope>
    <source>
        <strain>DSM 17664 / CCUG 51855 / 37</strain>
    </source>
</reference>
<evidence type="ECO:0000255" key="1">
    <source>
        <dbReference type="HAMAP-Rule" id="MF_00600"/>
    </source>
</evidence>
<feature type="chain" id="PRO_0000332051" description="Chaperonin GroEL 1">
    <location>
        <begin position="1"/>
        <end position="544"/>
    </location>
</feature>
<feature type="binding site" evidence="1">
    <location>
        <begin position="29"/>
        <end position="32"/>
    </location>
    <ligand>
        <name>ATP</name>
        <dbReference type="ChEBI" id="CHEBI:30616"/>
    </ligand>
</feature>
<feature type="binding site" evidence="1">
    <location>
        <position position="50"/>
    </location>
    <ligand>
        <name>ATP</name>
        <dbReference type="ChEBI" id="CHEBI:30616"/>
    </ligand>
</feature>
<feature type="binding site" evidence="1">
    <location>
        <begin position="86"/>
        <end position="90"/>
    </location>
    <ligand>
        <name>ATP</name>
        <dbReference type="ChEBI" id="CHEBI:30616"/>
    </ligand>
</feature>
<feature type="binding site" evidence="1">
    <location>
        <position position="414"/>
    </location>
    <ligand>
        <name>ATP</name>
        <dbReference type="ChEBI" id="CHEBI:30616"/>
    </ligand>
</feature>
<feature type="binding site" evidence="1">
    <location>
        <position position="494"/>
    </location>
    <ligand>
        <name>ATP</name>
        <dbReference type="ChEBI" id="CHEBI:30616"/>
    </ligand>
</feature>
<name>CH601_PSYIN</name>
<protein>
    <recommendedName>
        <fullName evidence="1">Chaperonin GroEL 1</fullName>
        <ecNumber evidence="1">5.6.1.7</ecNumber>
    </recommendedName>
    <alternativeName>
        <fullName evidence="1">60 kDa chaperonin 1</fullName>
    </alternativeName>
    <alternativeName>
        <fullName evidence="1">Chaperonin-60 1</fullName>
        <shortName evidence="1">Cpn60 1</shortName>
    </alternativeName>
</protein>
<organism>
    <name type="scientific">Psychromonas ingrahamii (strain DSM 17664 / CCUG 51855 / 37)</name>
    <dbReference type="NCBI Taxonomy" id="357804"/>
    <lineage>
        <taxon>Bacteria</taxon>
        <taxon>Pseudomonadati</taxon>
        <taxon>Pseudomonadota</taxon>
        <taxon>Gammaproteobacteria</taxon>
        <taxon>Alteromonadales</taxon>
        <taxon>Psychromonadaceae</taxon>
        <taxon>Psychromonas</taxon>
    </lineage>
</organism>
<keyword id="KW-0067">ATP-binding</keyword>
<keyword id="KW-0143">Chaperone</keyword>
<keyword id="KW-0963">Cytoplasm</keyword>
<keyword id="KW-0413">Isomerase</keyword>
<keyword id="KW-0547">Nucleotide-binding</keyword>
<keyword id="KW-1185">Reference proteome</keyword>
<sequence length="544" mass="57424">MSKEIKFGNDSRSKMLNGVNILADAVKITLGPKGRNVVIDKSYGAPQITKDGVTVAKEIELEDKFENMGAQMVKDVASQTNDAAGDGTTTATVLAQAIIADGLKAVAAGMNPMDLKRGIDQTVKAAVAELKKLSTPCSDSKAITQVGTISANSDHEIGEIIAQAMQKVGNQGVITVEEGQGLETELDVVEGMQFDRGYLSPYFMTNHESGTVELENPYILLVDKKIGNIRELLPTLEAVAKASKPLLIIAEDVEGEALATLVVNNMRGIVKVCAVKAPGFGDRRKAMLQDIATLTGGTVISEEIGLDMEKVQLEDLGQAKRVVINKDETTIIDGIGDESVINARVSQIKQQIEASTSDYDKEKLQERSAKLAGGVAVIKVGASTEVEMKEKKDRVDDALHATRAAVEEGVVAGGGVALVRVAAILKGLTGENEDQNVGIRVALRAMEAPLRQIVENCGEEASVVANNVRQGEGNYGYNATTGEYGDMLEMGIIDPTKVARSALQFAASVAALMITTECMITDRPVAASAAAPDMGGMGGMGGMM</sequence>
<proteinExistence type="inferred from homology"/>
<gene>
    <name evidence="1" type="primary">groEL1</name>
    <name evidence="1" type="synonym">groL1</name>
    <name type="ordered locus">Ping_0844</name>
</gene>
<accession>A1ST72</accession>
<comment type="function">
    <text evidence="1">Together with its co-chaperonin GroES, plays an essential role in assisting protein folding. The GroEL-GroES system forms a nano-cage that allows encapsulation of the non-native substrate proteins and provides a physical environment optimized to promote and accelerate protein folding.</text>
</comment>
<comment type="catalytic activity">
    <reaction evidence="1">
        <text>ATP + H2O + a folded polypeptide = ADP + phosphate + an unfolded polypeptide.</text>
        <dbReference type="EC" id="5.6.1.7"/>
    </reaction>
</comment>
<comment type="subunit">
    <text evidence="1">Forms a cylinder of 14 subunits composed of two heptameric rings stacked back-to-back. Interacts with the co-chaperonin GroES.</text>
</comment>
<comment type="subcellular location">
    <subcellularLocation>
        <location evidence="1">Cytoplasm</location>
    </subcellularLocation>
</comment>
<comment type="similarity">
    <text evidence="1">Belongs to the chaperonin (HSP60) family.</text>
</comment>